<accession>P11128</accession>
<gene>
    <name type="primary">P6</name>
</gene>
<feature type="initiator methionine" description="Removed; by host" evidence="2">
    <location>
        <position position="1"/>
    </location>
</feature>
<feature type="chain" id="PRO_0000164640" description="Fusion protein P6">
    <location>
        <begin position="2"/>
        <end position="168"/>
    </location>
</feature>
<feature type="transmembrane region" description="Helical" evidence="1">
    <location>
        <begin position="29"/>
        <end position="49"/>
    </location>
</feature>
<feature type="transmembrane region" description="Helical" evidence="1">
    <location>
        <begin position="52"/>
        <end position="72"/>
    </location>
</feature>
<feature type="transmembrane region" description="Helical" evidence="1">
    <location>
        <begin position="94"/>
        <end position="114"/>
    </location>
</feature>
<feature type="transmembrane region" description="Helical" evidence="1">
    <location>
        <begin position="143"/>
        <end position="163"/>
    </location>
</feature>
<evidence type="ECO:0000255" key="1"/>
<evidence type="ECO:0000269" key="2">
    <source>
    </source>
</evidence>
<evidence type="ECO:0000269" key="3">
    <source>
    </source>
</evidence>
<evidence type="ECO:0000305" key="4"/>
<evidence type="ECO:0000305" key="5">
    <source>
    </source>
</evidence>
<reference key="1">
    <citation type="journal article" date="1988" name="Virology">
        <title>Nucleotide sequence of the middle dsRNA segment of bacteriophage phi 6: placement of the genes of membrane-associated proteins.</title>
        <authorList>
            <person name="Gottlieb P."/>
            <person name="Metzger S."/>
            <person name="Romantschuk M."/>
            <person name="Carton J."/>
            <person name="Strassman J."/>
            <person name="Bamford D.H."/>
            <person name="Kalkkinen N."/>
            <person name="Mindich L."/>
        </authorList>
    </citation>
    <scope>NUCLEOTIDE SEQUENCE [GENOMIC RNA]</scope>
    <scope>PROTEIN SEQUENCE OF 2-15</scope>
</reference>
<reference key="2">
    <citation type="journal article" date="1983" name="Virology">
        <title>The structure of bacteriophage phi 6: protease digestion of phi 6 virions.</title>
        <authorList>
            <person name="Stitt B.L."/>
            <person name="Mindich L."/>
        </authorList>
    </citation>
    <scope>INTERACTION WITH P3</scope>
</reference>
<reference key="3">
    <citation type="journal article" date="1987" name="EMBO J.">
        <title>Membrane fusion in prokaryotes: bacteriophage phi 6 membrane fuses with the Pseudomonas syringae outer membrane.</title>
        <authorList>
            <person name="Bamford D.H."/>
            <person name="Romantschuk M."/>
            <person name="Somerharju P.J."/>
        </authorList>
    </citation>
    <scope>FUNCTION</scope>
</reference>
<name>FUS_BPPH6</name>
<dbReference type="EMBL" id="M17462">
    <property type="protein sequence ID" value="AAA68484.1"/>
    <property type="molecule type" value="Genomic_RNA"/>
</dbReference>
<dbReference type="PIR" id="B28648">
    <property type="entry name" value="P6BPF6"/>
</dbReference>
<dbReference type="RefSeq" id="NP_620350.1">
    <property type="nucleotide sequence ID" value="NC_003716.1"/>
</dbReference>
<dbReference type="SMR" id="P11128"/>
<dbReference type="KEGG" id="vg:956440"/>
<dbReference type="Proteomes" id="UP000002610">
    <property type="component" value="Genome"/>
</dbReference>
<dbReference type="GO" id="GO:0016020">
    <property type="term" value="C:membrane"/>
    <property type="evidence" value="ECO:0007669"/>
    <property type="project" value="UniProtKB-KW"/>
</dbReference>
<dbReference type="GO" id="GO:0019031">
    <property type="term" value="C:viral envelope"/>
    <property type="evidence" value="ECO:0007669"/>
    <property type="project" value="UniProtKB-KW"/>
</dbReference>
<dbReference type="GO" id="GO:0055036">
    <property type="term" value="C:virion membrane"/>
    <property type="evidence" value="ECO:0007669"/>
    <property type="project" value="UniProtKB-SubCell"/>
</dbReference>
<dbReference type="GO" id="GO:0098997">
    <property type="term" value="P:fusion of virus membrane with host outer membrane"/>
    <property type="evidence" value="ECO:0007669"/>
    <property type="project" value="UniProtKB-KW"/>
</dbReference>
<dbReference type="GO" id="GO:0046718">
    <property type="term" value="P:symbiont entry into host cell"/>
    <property type="evidence" value="ECO:0007669"/>
    <property type="project" value="UniProtKB-KW"/>
</dbReference>
<keyword id="KW-0903">Direct protein sequencing</keyword>
<keyword id="KW-1168">Fusion of virus membrane with host membrane</keyword>
<keyword id="KW-1239">Fusion of virus membrane with host outer membrane</keyword>
<keyword id="KW-0472">Membrane</keyword>
<keyword id="KW-1185">Reference proteome</keyword>
<keyword id="KW-0812">Transmembrane</keyword>
<keyword id="KW-1133">Transmembrane helix</keyword>
<keyword id="KW-0261">Viral envelope protein</keyword>
<keyword id="KW-1162">Viral penetration into host cytoplasm</keyword>
<keyword id="KW-0946">Virion</keyword>
<keyword id="KW-1160">Virus entry into host cell</keyword>
<protein>
    <recommendedName>
        <fullName>Fusion protein P6</fullName>
    </recommendedName>
</protein>
<proteinExistence type="evidence at protein level"/>
<organismHost>
    <name type="scientific">Pseudomonas savastanoi pv. phaseolicola</name>
    <name type="common">Pseudomonas syringae pv. phaseolicola</name>
    <dbReference type="NCBI Taxonomy" id="319"/>
</organismHost>
<organism>
    <name type="scientific">Pseudomonas phage phi6</name>
    <name type="common">Bacteriophage phi-6</name>
    <dbReference type="NCBI Taxonomy" id="2928686"/>
    <lineage>
        <taxon>Viruses</taxon>
        <taxon>Riboviria</taxon>
        <taxon>Orthornavirae</taxon>
        <taxon>Duplornaviricota</taxon>
        <taxon>Vidaverviricetes</taxon>
        <taxon>Mindivirales</taxon>
        <taxon>Cystoviridae</taxon>
        <taxon>Cystovirus</taxon>
        <taxon>Cystovirus phi6</taxon>
    </lineage>
</organism>
<sequence length="168" mass="17360">MSIFSSLFKVIKKVISKVVATLKKIFKKIWPLLLIVAIIYFAPYLAGFFTSAGFTGIGGIFSSIATTITPTLTSFLSTAWSGVGSLASTAWSGFQSLGMGTQLAVVSGAAALIAPEETAQLVTEIGTTVGDIAGTIIGGVAKALPGWIWIAAGGLAVWALWPSSDSKE</sequence>
<comment type="function">
    <text evidence="3">Mediates the fusion with the host outer membrane during virus entry into the host cell.</text>
</comment>
<comment type="subunit">
    <text evidence="5">Interacts with P3.</text>
</comment>
<comment type="subcellular location">
    <subcellularLocation>
        <location evidence="4">Virion membrane</location>
        <topology evidence="4">Multi-pass membrane protein</topology>
    </subcellularLocation>
</comment>